<sequence>MTLAQFAMIFWHDLAAPILAGIITAAIVSWWRNRK</sequence>
<comment type="function">
    <text evidence="2">Toxic component of a type I toxin-antitoxin (TA) system. Inhibits ATP synthesis possibly due to its insertion in the cell inner membrane, ATP levels drop over 50% 2 minutes after induction (PubMed:24513967). Overexpression is toxic leading to cell death, it inhibits cell growth within 30 minutes; C-terminally tagged versions of the protein are toxic while N-terminally tagged versions are not (PubMed:24513967).</text>
</comment>
<comment type="subcellular location">
    <subcellularLocation>
        <location evidence="2">Cell inner membrane</location>
        <topology evidence="4">Single-pass membrane protein</topology>
    </subcellularLocation>
</comment>
<comment type="induction">
    <text evidence="3">Expression of the proteinaceous toxin is probably controlled by an antisense sRNA, in this case RdlA. Only a few of these TA systems have been mechanistically characterized; the mechanisms used to control expression of the toxin gene are not necessarily the same (Probable).</text>
</comment>
<comment type="similarity">
    <text evidence="3">Belongs to the Ldr toxic peptide family.</text>
</comment>
<reference key="1">
    <citation type="journal article" date="1997" name="Science">
        <title>The complete genome sequence of Escherichia coli K-12.</title>
        <authorList>
            <person name="Blattner F.R."/>
            <person name="Plunkett G. III"/>
            <person name="Bloch C.A."/>
            <person name="Perna N.T."/>
            <person name="Burland V."/>
            <person name="Riley M."/>
            <person name="Collado-Vides J."/>
            <person name="Glasner J.D."/>
            <person name="Rode C.K."/>
            <person name="Mayhew G.F."/>
            <person name="Gregor J."/>
            <person name="Davis N.W."/>
            <person name="Kirkpatrick H.A."/>
            <person name="Goeden M.A."/>
            <person name="Rose D.J."/>
            <person name="Mau B."/>
            <person name="Shao Y."/>
        </authorList>
    </citation>
    <scope>NUCLEOTIDE SEQUENCE [LARGE SCALE GENOMIC DNA]</scope>
    <source>
        <strain>K12 / MG1655 / ATCC 47076</strain>
    </source>
</reference>
<reference key="2">
    <citation type="journal article" date="2006" name="Mol. Syst. Biol.">
        <title>Highly accurate genome sequences of Escherichia coli K-12 strains MG1655 and W3110.</title>
        <authorList>
            <person name="Hayashi K."/>
            <person name="Morooka N."/>
            <person name="Yamamoto Y."/>
            <person name="Fujita K."/>
            <person name="Isono K."/>
            <person name="Choi S."/>
            <person name="Ohtsubo E."/>
            <person name="Baba T."/>
            <person name="Wanner B.L."/>
            <person name="Mori H."/>
            <person name="Horiuchi T."/>
        </authorList>
    </citation>
    <scope>NUCLEOTIDE SEQUENCE [LARGE SCALE GENOMIC DNA]</scope>
    <source>
        <strain>K12 / W3110 / ATCC 27325 / DSM 5911</strain>
    </source>
</reference>
<reference key="3">
    <citation type="journal article" date="2002" name="Mol. Microbiol.">
        <title>Molecular characterization of long direct repeat (LDR) sequences expressing a stable mRNA encoding for a 35-amino-acid cell-killing peptide and a cis-encoded small antisense RNA in Escherichia coli.</title>
        <authorList>
            <person name="Kawano M."/>
            <person name="Oshima T."/>
            <person name="Kasai H."/>
            <person name="Mori H."/>
        </authorList>
    </citation>
    <scope>IDENTIFICATION</scope>
</reference>
<reference key="4">
    <citation type="journal article" date="2014" name="J. Mol. Microbiol. Biotechnol.">
        <title>Characterization of LdrA (long direct repeat A) protein of Escherichia coli.</title>
        <authorList>
            <person name="Yamaguchi Y."/>
            <person name="Tokunaga N."/>
            <person name="Inouye M."/>
            <person name="Phadtare S."/>
        </authorList>
    </citation>
    <scope>FUNCTION AS A TOXIN</scope>
    <scope>SUBCELLULAR LOCATION</scope>
</reference>
<dbReference type="EMBL" id="U00096">
    <property type="protein sequence ID" value="AAT48126.1"/>
    <property type="molecule type" value="Genomic_DNA"/>
</dbReference>
<dbReference type="EMBL" id="AP009048">
    <property type="protein sequence ID" value="BAE76392.1"/>
    <property type="molecule type" value="Genomic_DNA"/>
</dbReference>
<dbReference type="RefSeq" id="WP_000170955.1">
    <property type="nucleotide sequence ID" value="NZ_SSZK01000010.1"/>
</dbReference>
<dbReference type="RefSeq" id="YP_025297.1">
    <property type="nucleotide sequence ID" value="NC_000913.3"/>
</dbReference>
<dbReference type="SMR" id="P0DPD0"/>
<dbReference type="FunCoup" id="P0DPD0">
    <property type="interactions" value="8"/>
</dbReference>
<dbReference type="STRING" id="511145.b4419"/>
<dbReference type="PaxDb" id="511145-b4419"/>
<dbReference type="EnsemblBacteria" id="AAT48126">
    <property type="protein sequence ID" value="AAT48126"/>
    <property type="gene ID" value="b4419"/>
</dbReference>
<dbReference type="GeneID" id="2847733"/>
<dbReference type="KEGG" id="ecj:JW5957"/>
<dbReference type="KEGG" id="eco:b4419"/>
<dbReference type="KEGG" id="eco:b4423"/>
<dbReference type="HOGENOM" id="CLU_212598_1_0_6"/>
<dbReference type="InParanoid" id="P0DPD0"/>
<dbReference type="OrthoDB" id="6588978at2"/>
<dbReference type="BioCyc" id="EcoCyc:MONOMER0-1601"/>
<dbReference type="PRO" id="PR:P0DPD0"/>
<dbReference type="Proteomes" id="UP000000625">
    <property type="component" value="Chromosome"/>
</dbReference>
<dbReference type="GO" id="GO:0005886">
    <property type="term" value="C:plasma membrane"/>
    <property type="evidence" value="ECO:0000314"/>
    <property type="project" value="EcoCyc"/>
</dbReference>
<dbReference type="InterPro" id="IPR025253">
    <property type="entry name" value="Toxin_Ldr"/>
</dbReference>
<dbReference type="Pfam" id="PF13940">
    <property type="entry name" value="Ldr_toxin"/>
    <property type="match status" value="1"/>
</dbReference>
<protein>
    <recommendedName>
        <fullName>Small toxic polypeptide LdrA</fullName>
    </recommendedName>
</protein>
<proteinExistence type="evidence at protein level"/>
<organism>
    <name type="scientific">Escherichia coli (strain K12)</name>
    <dbReference type="NCBI Taxonomy" id="83333"/>
    <lineage>
        <taxon>Bacteria</taxon>
        <taxon>Pseudomonadati</taxon>
        <taxon>Pseudomonadota</taxon>
        <taxon>Gammaproteobacteria</taxon>
        <taxon>Enterobacterales</taxon>
        <taxon>Enterobacteriaceae</taxon>
        <taxon>Escherichia</taxon>
    </lineage>
</organism>
<evidence type="ECO:0000255" key="1"/>
<evidence type="ECO:0000269" key="2">
    <source>
    </source>
</evidence>
<evidence type="ECO:0000305" key="3"/>
<evidence type="ECO:0000305" key="4">
    <source>
    </source>
</evidence>
<feature type="peptide" id="PRO_0000230292" description="Small toxic polypeptide LdrA">
    <location>
        <begin position="1"/>
        <end position="35"/>
    </location>
</feature>
<feature type="transmembrane region" description="Helical" evidence="1">
    <location>
        <begin position="8"/>
        <end position="28"/>
    </location>
</feature>
<accession>P0DPD0</accession>
<accession>Q2MBG4</accession>
<accession>Q6BF86</accession>
<name>LDRA_ECOLI</name>
<gene>
    <name type="primary">ldrA</name>
    <name type="ordered locus">b4419</name>
    <name type="ordered locus">JW5957</name>
</gene>
<keyword id="KW-0997">Cell inner membrane</keyword>
<keyword id="KW-1003">Cell membrane</keyword>
<keyword id="KW-0472">Membrane</keyword>
<keyword id="KW-1185">Reference proteome</keyword>
<keyword id="KW-1277">Toxin-antitoxin system</keyword>
<keyword id="KW-0812">Transmembrane</keyword>
<keyword id="KW-1133">Transmembrane helix</keyword>